<organism>
    <name type="scientific">Archaeoglobus fulgidus (strain ATCC 49558 / DSM 4304 / JCM 9628 / NBRC 100126 / VC-16)</name>
    <dbReference type="NCBI Taxonomy" id="224325"/>
    <lineage>
        <taxon>Archaea</taxon>
        <taxon>Methanobacteriati</taxon>
        <taxon>Methanobacteriota</taxon>
        <taxon>Archaeoglobi</taxon>
        <taxon>Archaeoglobales</taxon>
        <taxon>Archaeoglobaceae</taxon>
        <taxon>Archaeoglobus</taxon>
    </lineage>
</organism>
<sequence>MNEITPLFDEEVIKVLVQTRNLLEEILETLDIMADKELMEAIFKSENEIRQGKTRNFKEILKELP</sequence>
<reference key="1">
    <citation type="journal article" date="1997" name="Nature">
        <title>The complete genome sequence of the hyperthermophilic, sulphate-reducing archaeon Archaeoglobus fulgidus.</title>
        <authorList>
            <person name="Klenk H.-P."/>
            <person name="Clayton R.A."/>
            <person name="Tomb J.-F."/>
            <person name="White O."/>
            <person name="Nelson K.E."/>
            <person name="Ketchum K.A."/>
            <person name="Dodson R.J."/>
            <person name="Gwinn M.L."/>
            <person name="Hickey E.K."/>
            <person name="Peterson J.D."/>
            <person name="Richardson D.L."/>
            <person name="Kerlavage A.R."/>
            <person name="Graham D.E."/>
            <person name="Kyrpides N.C."/>
            <person name="Fleischmann R.D."/>
            <person name="Quackenbush J."/>
            <person name="Lee N.H."/>
            <person name="Sutton G.G."/>
            <person name="Gill S.R."/>
            <person name="Kirkness E.F."/>
            <person name="Dougherty B.A."/>
            <person name="McKenney K."/>
            <person name="Adams M.D."/>
            <person name="Loftus B.J."/>
            <person name="Peterson S.N."/>
            <person name="Reich C.I."/>
            <person name="McNeil L.K."/>
            <person name="Badger J.H."/>
            <person name="Glodek A."/>
            <person name="Zhou L."/>
            <person name="Overbeek R."/>
            <person name="Gocayne J.D."/>
            <person name="Weidman J.F."/>
            <person name="McDonald L.A."/>
            <person name="Utterback T.R."/>
            <person name="Cotton M.D."/>
            <person name="Spriggs T."/>
            <person name="Artiach P."/>
            <person name="Kaine B.P."/>
            <person name="Sykes S.M."/>
            <person name="Sadow P.W."/>
            <person name="D'Andrea K.P."/>
            <person name="Bowman C."/>
            <person name="Fujii C."/>
            <person name="Garland S.A."/>
            <person name="Mason T.M."/>
            <person name="Olsen G.J."/>
            <person name="Fraser C.M."/>
            <person name="Smith H.O."/>
            <person name="Woese C.R."/>
            <person name="Venter J.C."/>
        </authorList>
    </citation>
    <scope>NUCLEOTIDE SEQUENCE [LARGE SCALE GENOMIC DNA]</scope>
    <source>
        <strain>ATCC 49558 / DSM 4304 / JCM 9628 / NBRC 100126 / VC-16</strain>
    </source>
</reference>
<protein>
    <recommendedName>
        <fullName>Uncharacterized protein AF_1088</fullName>
    </recommendedName>
</protein>
<accession>O29177</accession>
<gene>
    <name type="ordered locus">AF_1088</name>
</gene>
<feature type="chain" id="PRO_0000127961" description="Uncharacterized protein AF_1088">
    <location>
        <begin position="1"/>
        <end position="65"/>
    </location>
</feature>
<name>Y1088_ARCFU</name>
<dbReference type="EMBL" id="AE000782">
    <property type="protein sequence ID" value="AAB90164.1"/>
    <property type="molecule type" value="Genomic_DNA"/>
</dbReference>
<dbReference type="PIR" id="G69385">
    <property type="entry name" value="G69385"/>
</dbReference>
<dbReference type="RefSeq" id="WP_010878584.1">
    <property type="nucleotide sequence ID" value="NC_000917.1"/>
</dbReference>
<dbReference type="SMR" id="O29177"/>
<dbReference type="STRING" id="224325.AF_1088"/>
<dbReference type="PaxDb" id="224325-AF_1088"/>
<dbReference type="EnsemblBacteria" id="AAB90164">
    <property type="protein sequence ID" value="AAB90164"/>
    <property type="gene ID" value="AF_1088"/>
</dbReference>
<dbReference type="GeneID" id="1484309"/>
<dbReference type="KEGG" id="afu:AF_1088"/>
<dbReference type="eggNOG" id="arCOG06123">
    <property type="taxonomic scope" value="Archaea"/>
</dbReference>
<dbReference type="HOGENOM" id="CLU_206257_0_0_2"/>
<dbReference type="OrthoDB" id="383629at2157"/>
<dbReference type="Proteomes" id="UP000002199">
    <property type="component" value="Chromosome"/>
</dbReference>
<dbReference type="Gene3D" id="1.10.1220.170">
    <property type="match status" value="1"/>
</dbReference>
<proteinExistence type="predicted"/>
<keyword id="KW-1185">Reference proteome</keyword>